<dbReference type="EMBL" id="AE000666">
    <property type="protein sequence ID" value="AAB86085.1"/>
    <property type="molecule type" value="Genomic_DNA"/>
</dbReference>
<dbReference type="PIR" id="D69082">
    <property type="entry name" value="D69082"/>
</dbReference>
<dbReference type="RefSeq" id="WP_010877220.1">
    <property type="nucleotide sequence ID" value="NC_000916.1"/>
</dbReference>
<dbReference type="SMR" id="O27649"/>
<dbReference type="FunCoup" id="O27649">
    <property type="interactions" value="136"/>
</dbReference>
<dbReference type="STRING" id="187420.MTH_1612"/>
<dbReference type="PaxDb" id="187420-MTH_1612"/>
<dbReference type="EnsemblBacteria" id="AAB86085">
    <property type="protein sequence ID" value="AAB86085"/>
    <property type="gene ID" value="MTH_1612"/>
</dbReference>
<dbReference type="KEGG" id="mth:MTH_1612"/>
<dbReference type="PATRIC" id="fig|187420.15.peg.1576"/>
<dbReference type="HOGENOM" id="CLU_112570_3_2_2"/>
<dbReference type="InParanoid" id="O27649"/>
<dbReference type="Proteomes" id="UP000005223">
    <property type="component" value="Chromosome"/>
</dbReference>
<dbReference type="GO" id="GO:0022625">
    <property type="term" value="C:cytosolic large ribosomal subunit"/>
    <property type="evidence" value="ECO:0007669"/>
    <property type="project" value="TreeGrafter"/>
</dbReference>
<dbReference type="GO" id="GO:0003735">
    <property type="term" value="F:structural constituent of ribosome"/>
    <property type="evidence" value="ECO:0007669"/>
    <property type="project" value="InterPro"/>
</dbReference>
<dbReference type="GO" id="GO:0002181">
    <property type="term" value="P:cytoplasmic translation"/>
    <property type="evidence" value="ECO:0007669"/>
    <property type="project" value="TreeGrafter"/>
</dbReference>
<dbReference type="CDD" id="cd00463">
    <property type="entry name" value="Ribosomal_L31e"/>
    <property type="match status" value="1"/>
</dbReference>
<dbReference type="Gene3D" id="3.10.440.10">
    <property type="match status" value="1"/>
</dbReference>
<dbReference type="HAMAP" id="MF_00410">
    <property type="entry name" value="Ribosomal_eL31"/>
    <property type="match status" value="1"/>
</dbReference>
<dbReference type="InterPro" id="IPR000054">
    <property type="entry name" value="Ribosomal_eL31"/>
</dbReference>
<dbReference type="InterPro" id="IPR020052">
    <property type="entry name" value="Ribosomal_eL31_CS"/>
</dbReference>
<dbReference type="InterPro" id="IPR023621">
    <property type="entry name" value="Ribosomal_eL31_dom_sf"/>
</dbReference>
<dbReference type="NCBIfam" id="NF002258">
    <property type="entry name" value="PRK01192.1-1"/>
    <property type="match status" value="1"/>
</dbReference>
<dbReference type="PANTHER" id="PTHR10956">
    <property type="entry name" value="60S RIBOSOMAL PROTEIN L31"/>
    <property type="match status" value="1"/>
</dbReference>
<dbReference type="PANTHER" id="PTHR10956:SF0">
    <property type="entry name" value="60S RIBOSOMAL PROTEIN L31"/>
    <property type="match status" value="1"/>
</dbReference>
<dbReference type="Pfam" id="PF01198">
    <property type="entry name" value="Ribosomal_L31e"/>
    <property type="match status" value="1"/>
</dbReference>
<dbReference type="SMART" id="SM01380">
    <property type="entry name" value="Ribosomal_L31e"/>
    <property type="match status" value="1"/>
</dbReference>
<dbReference type="SUPFAM" id="SSF54575">
    <property type="entry name" value="Ribosomal protein L31e"/>
    <property type="match status" value="1"/>
</dbReference>
<dbReference type="PROSITE" id="PS01144">
    <property type="entry name" value="RIBOSOMAL_L31E"/>
    <property type="match status" value="1"/>
</dbReference>
<organism>
    <name type="scientific">Methanothermobacter thermautotrophicus (strain ATCC 29096 / DSM 1053 / JCM 10044 / NBRC 100330 / Delta H)</name>
    <name type="common">Methanobacterium thermoautotrophicum</name>
    <dbReference type="NCBI Taxonomy" id="187420"/>
    <lineage>
        <taxon>Archaea</taxon>
        <taxon>Methanobacteriati</taxon>
        <taxon>Methanobacteriota</taxon>
        <taxon>Methanomada group</taxon>
        <taxon>Methanobacteria</taxon>
        <taxon>Methanobacteriales</taxon>
        <taxon>Methanobacteriaceae</taxon>
        <taxon>Methanothermobacter</taxon>
    </lineage>
</organism>
<name>RL31_METTH</name>
<feature type="chain" id="PRO_0000153798" description="Large ribosomal subunit protein eL31">
    <location>
        <begin position="1"/>
        <end position="81"/>
    </location>
</feature>
<sequence length="81" mass="9435">MERIYVIPLRKAKNVPRTIRAPKAVKIVREFLMKHMKADTVKLDESINEKLWERGIQKIPPRIKVKAVKDEDGVVEATLEE</sequence>
<comment type="similarity">
    <text evidence="1">Belongs to the eukaryotic ribosomal protein eL31 family.</text>
</comment>
<proteinExistence type="inferred from homology"/>
<reference key="1">
    <citation type="journal article" date="1997" name="J. Bacteriol.">
        <title>Complete genome sequence of Methanobacterium thermoautotrophicum deltaH: functional analysis and comparative genomics.</title>
        <authorList>
            <person name="Smith D.R."/>
            <person name="Doucette-Stamm L.A."/>
            <person name="Deloughery C."/>
            <person name="Lee H.-M."/>
            <person name="Dubois J."/>
            <person name="Aldredge T."/>
            <person name="Bashirzadeh R."/>
            <person name="Blakely D."/>
            <person name="Cook R."/>
            <person name="Gilbert K."/>
            <person name="Harrison D."/>
            <person name="Hoang L."/>
            <person name="Keagle P."/>
            <person name="Lumm W."/>
            <person name="Pothier B."/>
            <person name="Qiu D."/>
            <person name="Spadafora R."/>
            <person name="Vicare R."/>
            <person name="Wang Y."/>
            <person name="Wierzbowski J."/>
            <person name="Gibson R."/>
            <person name="Jiwani N."/>
            <person name="Caruso A."/>
            <person name="Bush D."/>
            <person name="Safer H."/>
            <person name="Patwell D."/>
            <person name="Prabhakar S."/>
            <person name="McDougall S."/>
            <person name="Shimer G."/>
            <person name="Goyal A."/>
            <person name="Pietrovski S."/>
            <person name="Church G.M."/>
            <person name="Daniels C.J."/>
            <person name="Mao J.-I."/>
            <person name="Rice P."/>
            <person name="Noelling J."/>
            <person name="Reeve J.N."/>
        </authorList>
    </citation>
    <scope>NUCLEOTIDE SEQUENCE [LARGE SCALE GENOMIC DNA]</scope>
    <source>
        <strain>ATCC 29096 / DSM 1053 / JCM 10044 / NBRC 100330 / Delta H</strain>
    </source>
</reference>
<evidence type="ECO:0000305" key="1"/>
<accession>O27649</accession>
<keyword id="KW-1185">Reference proteome</keyword>
<keyword id="KW-0687">Ribonucleoprotein</keyword>
<keyword id="KW-0689">Ribosomal protein</keyword>
<protein>
    <recommendedName>
        <fullName evidence="1">Large ribosomal subunit protein eL31</fullName>
    </recommendedName>
    <alternativeName>
        <fullName>50S ribosomal protein L31e</fullName>
    </alternativeName>
</protein>
<gene>
    <name type="primary">rpl31e</name>
    <name type="ordered locus">MTH_1612</name>
</gene>